<proteinExistence type="inferred from homology"/>
<comment type="function">
    <text evidence="1">Binds the 23S rRNA.</text>
</comment>
<comment type="cofactor">
    <cofactor evidence="1">
        <name>Zn(2+)</name>
        <dbReference type="ChEBI" id="CHEBI:29105"/>
    </cofactor>
    <text evidence="1">Binds 1 zinc ion per subunit.</text>
</comment>
<comment type="subunit">
    <text evidence="1">Part of the 50S ribosomal subunit.</text>
</comment>
<comment type="similarity">
    <text evidence="1">Belongs to the bacterial ribosomal protein bL31 family. Type A subfamily.</text>
</comment>
<evidence type="ECO:0000255" key="1">
    <source>
        <dbReference type="HAMAP-Rule" id="MF_00501"/>
    </source>
</evidence>
<evidence type="ECO:0000305" key="2"/>
<feature type="chain" id="PRO_0000173184" description="Large ribosomal subunit protein bL31">
    <location>
        <begin position="1"/>
        <end position="71"/>
    </location>
</feature>
<feature type="binding site" evidence="1">
    <location>
        <position position="16"/>
    </location>
    <ligand>
        <name>Zn(2+)</name>
        <dbReference type="ChEBI" id="CHEBI:29105"/>
    </ligand>
</feature>
<feature type="binding site" evidence="1">
    <location>
        <position position="18"/>
    </location>
    <ligand>
        <name>Zn(2+)</name>
        <dbReference type="ChEBI" id="CHEBI:29105"/>
    </ligand>
</feature>
<feature type="binding site" evidence="1">
    <location>
        <position position="37"/>
    </location>
    <ligand>
        <name>Zn(2+)</name>
        <dbReference type="ChEBI" id="CHEBI:29105"/>
    </ligand>
</feature>
<feature type="binding site" evidence="1">
    <location>
        <position position="40"/>
    </location>
    <ligand>
        <name>Zn(2+)</name>
        <dbReference type="ChEBI" id="CHEBI:29105"/>
    </ligand>
</feature>
<reference key="1">
    <citation type="journal article" date="2004" name="Proc. Natl. Acad. Sci. U.S.A.">
        <title>Insights into the evolution of Yersinia pestis through whole-genome comparison with Yersinia pseudotuberculosis.</title>
        <authorList>
            <person name="Chain P.S.G."/>
            <person name="Carniel E."/>
            <person name="Larimer F.W."/>
            <person name="Lamerdin J."/>
            <person name="Stoutland P.O."/>
            <person name="Regala W.M."/>
            <person name="Georgescu A.M."/>
            <person name="Vergez L.M."/>
            <person name="Land M.L."/>
            <person name="Motin V.L."/>
            <person name="Brubaker R.R."/>
            <person name="Fowler J."/>
            <person name="Hinnebusch J."/>
            <person name="Marceau M."/>
            <person name="Medigue C."/>
            <person name="Simonet M."/>
            <person name="Chenal-Francisque V."/>
            <person name="Souza B."/>
            <person name="Dacheux D."/>
            <person name="Elliott J.M."/>
            <person name="Derbise A."/>
            <person name="Hauser L.J."/>
            <person name="Garcia E."/>
        </authorList>
    </citation>
    <scope>NUCLEOTIDE SEQUENCE [LARGE SCALE GENOMIC DNA]</scope>
    <source>
        <strain>IP32953</strain>
    </source>
</reference>
<accession>Q66G80</accession>
<sequence>MKQGIHPKYEQVTASCSCGNVIKINSTVGHDLNLDVCGECHPFYTGKQRDVASGGRVDRFNKRFSVPGAKK</sequence>
<keyword id="KW-0479">Metal-binding</keyword>
<keyword id="KW-0687">Ribonucleoprotein</keyword>
<keyword id="KW-0689">Ribosomal protein</keyword>
<keyword id="KW-0694">RNA-binding</keyword>
<keyword id="KW-0699">rRNA-binding</keyword>
<keyword id="KW-0862">Zinc</keyword>
<protein>
    <recommendedName>
        <fullName evidence="1">Large ribosomal subunit protein bL31</fullName>
    </recommendedName>
    <alternativeName>
        <fullName evidence="2">50S ribosomal protein L31</fullName>
    </alternativeName>
</protein>
<organism>
    <name type="scientific">Yersinia pseudotuberculosis serotype I (strain IP32953)</name>
    <dbReference type="NCBI Taxonomy" id="273123"/>
    <lineage>
        <taxon>Bacteria</taxon>
        <taxon>Pseudomonadati</taxon>
        <taxon>Pseudomonadota</taxon>
        <taxon>Gammaproteobacteria</taxon>
        <taxon>Enterobacterales</taxon>
        <taxon>Yersiniaceae</taxon>
        <taxon>Yersinia</taxon>
    </lineage>
</organism>
<name>RL31_YERPS</name>
<dbReference type="EMBL" id="BX936398">
    <property type="protein sequence ID" value="CAH19342.1"/>
    <property type="molecule type" value="Genomic_DNA"/>
</dbReference>
<dbReference type="RefSeq" id="WP_002216737.1">
    <property type="nucleotide sequence ID" value="NZ_CP009712.1"/>
</dbReference>
<dbReference type="SMR" id="Q66G80"/>
<dbReference type="GeneID" id="96663581"/>
<dbReference type="KEGG" id="ypo:BZ17_2494"/>
<dbReference type="KEGG" id="yps:YPTB0102"/>
<dbReference type="PATRIC" id="fig|273123.14.peg.2615"/>
<dbReference type="Proteomes" id="UP000001011">
    <property type="component" value="Chromosome"/>
</dbReference>
<dbReference type="GO" id="GO:1990904">
    <property type="term" value="C:ribonucleoprotein complex"/>
    <property type="evidence" value="ECO:0007669"/>
    <property type="project" value="UniProtKB-KW"/>
</dbReference>
<dbReference type="GO" id="GO:0005840">
    <property type="term" value="C:ribosome"/>
    <property type="evidence" value="ECO:0007669"/>
    <property type="project" value="UniProtKB-KW"/>
</dbReference>
<dbReference type="GO" id="GO:0046872">
    <property type="term" value="F:metal ion binding"/>
    <property type="evidence" value="ECO:0007669"/>
    <property type="project" value="UniProtKB-KW"/>
</dbReference>
<dbReference type="GO" id="GO:0019843">
    <property type="term" value="F:rRNA binding"/>
    <property type="evidence" value="ECO:0007669"/>
    <property type="project" value="UniProtKB-KW"/>
</dbReference>
<dbReference type="GO" id="GO:0003735">
    <property type="term" value="F:structural constituent of ribosome"/>
    <property type="evidence" value="ECO:0007669"/>
    <property type="project" value="InterPro"/>
</dbReference>
<dbReference type="GO" id="GO:0006412">
    <property type="term" value="P:translation"/>
    <property type="evidence" value="ECO:0007669"/>
    <property type="project" value="UniProtKB-UniRule"/>
</dbReference>
<dbReference type="FunFam" id="4.10.830.30:FF:000001">
    <property type="entry name" value="50S ribosomal protein L31"/>
    <property type="match status" value="1"/>
</dbReference>
<dbReference type="Gene3D" id="4.10.830.30">
    <property type="entry name" value="Ribosomal protein L31"/>
    <property type="match status" value="1"/>
</dbReference>
<dbReference type="HAMAP" id="MF_00501">
    <property type="entry name" value="Ribosomal_bL31_1"/>
    <property type="match status" value="1"/>
</dbReference>
<dbReference type="InterPro" id="IPR034704">
    <property type="entry name" value="Ribosomal_bL28/bL31-like_sf"/>
</dbReference>
<dbReference type="InterPro" id="IPR002150">
    <property type="entry name" value="Ribosomal_bL31"/>
</dbReference>
<dbReference type="InterPro" id="IPR027491">
    <property type="entry name" value="Ribosomal_bL31_A"/>
</dbReference>
<dbReference type="InterPro" id="IPR042105">
    <property type="entry name" value="Ribosomal_bL31_sf"/>
</dbReference>
<dbReference type="NCBIfam" id="TIGR00105">
    <property type="entry name" value="L31"/>
    <property type="match status" value="1"/>
</dbReference>
<dbReference type="NCBIfam" id="NF000612">
    <property type="entry name" value="PRK00019.1"/>
    <property type="match status" value="1"/>
</dbReference>
<dbReference type="PANTHER" id="PTHR33280">
    <property type="entry name" value="50S RIBOSOMAL PROTEIN L31, CHLOROPLASTIC"/>
    <property type="match status" value="1"/>
</dbReference>
<dbReference type="PANTHER" id="PTHR33280:SF6">
    <property type="entry name" value="LARGE RIBOSOMAL SUBUNIT PROTEIN BL31A"/>
    <property type="match status" value="1"/>
</dbReference>
<dbReference type="Pfam" id="PF01197">
    <property type="entry name" value="Ribosomal_L31"/>
    <property type="match status" value="1"/>
</dbReference>
<dbReference type="PRINTS" id="PR01249">
    <property type="entry name" value="RIBOSOMALL31"/>
</dbReference>
<dbReference type="SUPFAM" id="SSF143800">
    <property type="entry name" value="L28p-like"/>
    <property type="match status" value="1"/>
</dbReference>
<dbReference type="PROSITE" id="PS01143">
    <property type="entry name" value="RIBOSOMAL_L31"/>
    <property type="match status" value="1"/>
</dbReference>
<gene>
    <name evidence="1" type="primary">rpmE</name>
    <name type="ordered locus">YPTB0102</name>
</gene>